<organism>
    <name type="scientific">Endomicrobium trichonymphae</name>
    <dbReference type="NCBI Taxonomy" id="1408204"/>
    <lineage>
        <taxon>Bacteria</taxon>
        <taxon>Pseudomonadati</taxon>
        <taxon>Elusimicrobiota</taxon>
        <taxon>Endomicrobiia</taxon>
        <taxon>Endomicrobiales</taxon>
        <taxon>Endomicrobiaceae</taxon>
        <taxon>Candidatus Endomicrobiellum</taxon>
    </lineage>
</organism>
<reference key="1">
    <citation type="journal article" date="2008" name="Proc. Natl. Acad. Sci. U.S.A.">
        <title>Complete genome of the uncultured termite group 1 bacteria in a single host protist cell.</title>
        <authorList>
            <person name="Hongoh Y."/>
            <person name="Sharma V.K."/>
            <person name="Prakash T."/>
            <person name="Noda S."/>
            <person name="Taylor T.D."/>
            <person name="Kudo T."/>
            <person name="Sakaki Y."/>
            <person name="Toyoda A."/>
            <person name="Hattori M."/>
            <person name="Ohkuma M."/>
        </authorList>
    </citation>
    <scope>NUCLEOTIDE SEQUENCE [LARGE SCALE GENOMIC DNA]</scope>
</reference>
<name>ATPE_ENDTX</name>
<accession>B1H0B4</accession>
<sequence>MNKFEVEILSPEGIVFKGATPSVSFPTTRGIITVLSGHINLITKLNSGEIIIEATDGTKKIIVSGGFIEIVNNNVNVVAEFAAHSDEISRQKIKQAIDHAKDMKNKRKEFVNMYAIESQLKKSAVDLKSGLEIKRKKI</sequence>
<protein>
    <recommendedName>
        <fullName evidence="1">ATP synthase epsilon chain</fullName>
    </recommendedName>
    <alternativeName>
        <fullName evidence="1">ATP synthase F1 sector epsilon subunit</fullName>
    </alternativeName>
    <alternativeName>
        <fullName evidence="1">F-ATPase epsilon subunit</fullName>
    </alternativeName>
</protein>
<proteinExistence type="inferred from homology"/>
<keyword id="KW-0066">ATP synthesis</keyword>
<keyword id="KW-0997">Cell inner membrane</keyword>
<keyword id="KW-1003">Cell membrane</keyword>
<keyword id="KW-0139">CF(1)</keyword>
<keyword id="KW-0375">Hydrogen ion transport</keyword>
<keyword id="KW-0406">Ion transport</keyword>
<keyword id="KW-0472">Membrane</keyword>
<keyword id="KW-0813">Transport</keyword>
<gene>
    <name evidence="1" type="primary">atpC</name>
    <name type="ordered locus">TGRD_463</name>
</gene>
<dbReference type="EMBL" id="AP009510">
    <property type="protein sequence ID" value="BAG13946.1"/>
    <property type="molecule type" value="Genomic_DNA"/>
</dbReference>
<dbReference type="RefSeq" id="WP_015423472.1">
    <property type="nucleotide sequence ID" value="NC_020419.1"/>
</dbReference>
<dbReference type="SMR" id="B1H0B4"/>
<dbReference type="STRING" id="471821.TGRD_463"/>
<dbReference type="KEGG" id="rsd:TGRD_463"/>
<dbReference type="HOGENOM" id="CLU_084338_2_1_0"/>
<dbReference type="Proteomes" id="UP000001691">
    <property type="component" value="Chromosome"/>
</dbReference>
<dbReference type="GO" id="GO:0005886">
    <property type="term" value="C:plasma membrane"/>
    <property type="evidence" value="ECO:0007669"/>
    <property type="project" value="UniProtKB-SubCell"/>
</dbReference>
<dbReference type="GO" id="GO:0045259">
    <property type="term" value="C:proton-transporting ATP synthase complex"/>
    <property type="evidence" value="ECO:0007669"/>
    <property type="project" value="UniProtKB-KW"/>
</dbReference>
<dbReference type="GO" id="GO:0005524">
    <property type="term" value="F:ATP binding"/>
    <property type="evidence" value="ECO:0007669"/>
    <property type="project" value="UniProtKB-UniRule"/>
</dbReference>
<dbReference type="GO" id="GO:0046933">
    <property type="term" value="F:proton-transporting ATP synthase activity, rotational mechanism"/>
    <property type="evidence" value="ECO:0007669"/>
    <property type="project" value="UniProtKB-UniRule"/>
</dbReference>
<dbReference type="CDD" id="cd12152">
    <property type="entry name" value="F1-ATPase_delta"/>
    <property type="match status" value="1"/>
</dbReference>
<dbReference type="Gene3D" id="2.60.15.10">
    <property type="entry name" value="F0F1 ATP synthase delta/epsilon subunit, N-terminal"/>
    <property type="match status" value="1"/>
</dbReference>
<dbReference type="HAMAP" id="MF_00530">
    <property type="entry name" value="ATP_synth_epsil_bac"/>
    <property type="match status" value="1"/>
</dbReference>
<dbReference type="InterPro" id="IPR001469">
    <property type="entry name" value="ATP_synth_F1_dsu/esu"/>
</dbReference>
<dbReference type="InterPro" id="IPR020546">
    <property type="entry name" value="ATP_synth_F1_dsu/esu_N"/>
</dbReference>
<dbReference type="InterPro" id="IPR036771">
    <property type="entry name" value="ATPsynth_dsu/esu_N"/>
</dbReference>
<dbReference type="NCBIfam" id="TIGR01216">
    <property type="entry name" value="ATP_synt_epsi"/>
    <property type="match status" value="1"/>
</dbReference>
<dbReference type="PANTHER" id="PTHR13822">
    <property type="entry name" value="ATP SYNTHASE DELTA/EPSILON CHAIN"/>
    <property type="match status" value="1"/>
</dbReference>
<dbReference type="PANTHER" id="PTHR13822:SF10">
    <property type="entry name" value="ATP SYNTHASE EPSILON CHAIN, CHLOROPLASTIC"/>
    <property type="match status" value="1"/>
</dbReference>
<dbReference type="Pfam" id="PF02823">
    <property type="entry name" value="ATP-synt_DE_N"/>
    <property type="match status" value="1"/>
</dbReference>
<dbReference type="SUPFAM" id="SSF51344">
    <property type="entry name" value="Epsilon subunit of F1F0-ATP synthase N-terminal domain"/>
    <property type="match status" value="1"/>
</dbReference>
<feature type="chain" id="PRO_1000146356" description="ATP synthase epsilon chain">
    <location>
        <begin position="1"/>
        <end position="138"/>
    </location>
</feature>
<evidence type="ECO:0000255" key="1">
    <source>
        <dbReference type="HAMAP-Rule" id="MF_00530"/>
    </source>
</evidence>
<comment type="function">
    <text evidence="1">Produces ATP from ADP in the presence of a proton gradient across the membrane.</text>
</comment>
<comment type="subunit">
    <text evidence="1">F-type ATPases have 2 components, CF(1) - the catalytic core - and CF(0) - the membrane proton channel. CF(1) has five subunits: alpha(3), beta(3), gamma(1), delta(1), epsilon(1). CF(0) has three main subunits: a, b and c.</text>
</comment>
<comment type="subcellular location">
    <subcellularLocation>
        <location evidence="1">Cell inner membrane</location>
        <topology evidence="1">Peripheral membrane protein</topology>
    </subcellularLocation>
</comment>
<comment type="similarity">
    <text evidence="1">Belongs to the ATPase epsilon chain family.</text>
</comment>